<keyword id="KW-0963">Cytoplasm</keyword>
<keyword id="KW-0413">Isomerase</keyword>
<keyword id="KW-0464">Manganese</keyword>
<keyword id="KW-0479">Metal-binding</keyword>
<keyword id="KW-1185">Reference proteome</keyword>
<feature type="chain" id="PRO_1000072810" description="Phosphopentomutase">
    <location>
        <begin position="1"/>
        <end position="389"/>
    </location>
</feature>
<feature type="binding site" evidence="1">
    <location>
        <position position="12"/>
    </location>
    <ligand>
        <name>Mn(2+)</name>
        <dbReference type="ChEBI" id="CHEBI:29035"/>
        <label>1</label>
    </ligand>
</feature>
<feature type="binding site" evidence="1">
    <location>
        <position position="284"/>
    </location>
    <ligand>
        <name>Mn(2+)</name>
        <dbReference type="ChEBI" id="CHEBI:29035"/>
        <label>2</label>
    </ligand>
</feature>
<feature type="binding site" evidence="1">
    <location>
        <position position="289"/>
    </location>
    <ligand>
        <name>Mn(2+)</name>
        <dbReference type="ChEBI" id="CHEBI:29035"/>
        <label>2</label>
    </ligand>
</feature>
<feature type="binding site" evidence="1">
    <location>
        <position position="325"/>
    </location>
    <ligand>
        <name>Mn(2+)</name>
        <dbReference type="ChEBI" id="CHEBI:29035"/>
        <label>1</label>
    </ligand>
</feature>
<feature type="binding site" evidence="1">
    <location>
        <position position="326"/>
    </location>
    <ligand>
        <name>Mn(2+)</name>
        <dbReference type="ChEBI" id="CHEBI:29035"/>
        <label>1</label>
    </ligand>
</feature>
<feature type="binding site" evidence="1">
    <location>
        <position position="337"/>
    </location>
    <ligand>
        <name>Mn(2+)</name>
        <dbReference type="ChEBI" id="CHEBI:29035"/>
        <label>2</label>
    </ligand>
</feature>
<accession>A7H8W4</accession>
<gene>
    <name evidence="1" type="primary">deoB</name>
    <name type="ordered locus">Anae109_0951</name>
</gene>
<reference key="1">
    <citation type="journal article" date="2015" name="Genome Announc.">
        <title>Complete genome sequence of Anaeromyxobacter sp. Fw109-5, an anaerobic, metal-reducing bacterium isolated from a contaminated subsurface environment.</title>
        <authorList>
            <person name="Hwang C."/>
            <person name="Copeland A."/>
            <person name="Lucas S."/>
            <person name="Lapidus A."/>
            <person name="Barry K."/>
            <person name="Glavina Del Rio T."/>
            <person name="Dalin E."/>
            <person name="Tice H."/>
            <person name="Pitluck S."/>
            <person name="Sims D."/>
            <person name="Brettin T."/>
            <person name="Bruce D.C."/>
            <person name="Detter J.C."/>
            <person name="Han C.S."/>
            <person name="Schmutz J."/>
            <person name="Larimer F.W."/>
            <person name="Land M.L."/>
            <person name="Hauser L.J."/>
            <person name="Kyrpides N."/>
            <person name="Lykidis A."/>
            <person name="Richardson P."/>
            <person name="Belieav A."/>
            <person name="Sanford R.A."/>
            <person name="Loeffler F.E."/>
            <person name="Fields M.W."/>
        </authorList>
    </citation>
    <scope>NUCLEOTIDE SEQUENCE [LARGE SCALE GENOMIC DNA]</scope>
    <source>
        <strain>Fw109-5</strain>
    </source>
</reference>
<name>DEOB_ANADF</name>
<protein>
    <recommendedName>
        <fullName evidence="1">Phosphopentomutase</fullName>
        <ecNumber evidence="1">5.4.2.7</ecNumber>
    </recommendedName>
    <alternativeName>
        <fullName evidence="1">Phosphodeoxyribomutase</fullName>
    </alternativeName>
</protein>
<dbReference type="EC" id="5.4.2.7" evidence="1"/>
<dbReference type="EMBL" id="CP000769">
    <property type="protein sequence ID" value="ABS25160.1"/>
    <property type="molecule type" value="Genomic_DNA"/>
</dbReference>
<dbReference type="RefSeq" id="WP_011985266.1">
    <property type="nucleotide sequence ID" value="NC_009675.1"/>
</dbReference>
<dbReference type="SMR" id="A7H8W4"/>
<dbReference type="STRING" id="404589.Anae109_0951"/>
<dbReference type="KEGG" id="afw:Anae109_0951"/>
<dbReference type="eggNOG" id="COG1015">
    <property type="taxonomic scope" value="Bacteria"/>
</dbReference>
<dbReference type="HOGENOM" id="CLU_053861_0_0_7"/>
<dbReference type="OrthoDB" id="9769930at2"/>
<dbReference type="UniPathway" id="UPA00002">
    <property type="reaction ID" value="UER00467"/>
</dbReference>
<dbReference type="Proteomes" id="UP000006382">
    <property type="component" value="Chromosome"/>
</dbReference>
<dbReference type="GO" id="GO:0005829">
    <property type="term" value="C:cytosol"/>
    <property type="evidence" value="ECO:0007669"/>
    <property type="project" value="TreeGrafter"/>
</dbReference>
<dbReference type="GO" id="GO:0000287">
    <property type="term" value="F:magnesium ion binding"/>
    <property type="evidence" value="ECO:0007669"/>
    <property type="project" value="InterPro"/>
</dbReference>
<dbReference type="GO" id="GO:0030145">
    <property type="term" value="F:manganese ion binding"/>
    <property type="evidence" value="ECO:0007669"/>
    <property type="project" value="UniProtKB-UniRule"/>
</dbReference>
<dbReference type="GO" id="GO:0008973">
    <property type="term" value="F:phosphopentomutase activity"/>
    <property type="evidence" value="ECO:0007669"/>
    <property type="project" value="UniProtKB-UniRule"/>
</dbReference>
<dbReference type="GO" id="GO:0006018">
    <property type="term" value="P:2-deoxyribose 1-phosphate catabolic process"/>
    <property type="evidence" value="ECO:0007669"/>
    <property type="project" value="UniProtKB-UniRule"/>
</dbReference>
<dbReference type="GO" id="GO:0006015">
    <property type="term" value="P:5-phosphoribose 1-diphosphate biosynthetic process"/>
    <property type="evidence" value="ECO:0007669"/>
    <property type="project" value="UniProtKB-UniPathway"/>
</dbReference>
<dbReference type="GO" id="GO:0043094">
    <property type="term" value="P:metabolic compound salvage"/>
    <property type="evidence" value="ECO:0007669"/>
    <property type="project" value="InterPro"/>
</dbReference>
<dbReference type="GO" id="GO:0009117">
    <property type="term" value="P:nucleotide metabolic process"/>
    <property type="evidence" value="ECO:0007669"/>
    <property type="project" value="InterPro"/>
</dbReference>
<dbReference type="CDD" id="cd16009">
    <property type="entry name" value="PPM"/>
    <property type="match status" value="1"/>
</dbReference>
<dbReference type="FunFam" id="3.30.70.1250:FF:000001">
    <property type="entry name" value="Phosphopentomutase"/>
    <property type="match status" value="1"/>
</dbReference>
<dbReference type="Gene3D" id="3.40.720.10">
    <property type="entry name" value="Alkaline Phosphatase, subunit A"/>
    <property type="match status" value="1"/>
</dbReference>
<dbReference type="Gene3D" id="3.30.70.1250">
    <property type="entry name" value="Phosphopentomutase"/>
    <property type="match status" value="1"/>
</dbReference>
<dbReference type="HAMAP" id="MF_00740">
    <property type="entry name" value="Phosphopentomut"/>
    <property type="match status" value="1"/>
</dbReference>
<dbReference type="InterPro" id="IPR017850">
    <property type="entry name" value="Alkaline_phosphatase_core_sf"/>
</dbReference>
<dbReference type="InterPro" id="IPR010045">
    <property type="entry name" value="DeoB"/>
</dbReference>
<dbReference type="InterPro" id="IPR006124">
    <property type="entry name" value="Metalloenzyme"/>
</dbReference>
<dbReference type="InterPro" id="IPR024052">
    <property type="entry name" value="Phosphopentomutase_DeoB_cap_sf"/>
</dbReference>
<dbReference type="NCBIfam" id="TIGR01696">
    <property type="entry name" value="deoB"/>
    <property type="match status" value="1"/>
</dbReference>
<dbReference type="NCBIfam" id="NF003766">
    <property type="entry name" value="PRK05362.1"/>
    <property type="match status" value="1"/>
</dbReference>
<dbReference type="PANTHER" id="PTHR21110">
    <property type="entry name" value="PHOSPHOPENTOMUTASE"/>
    <property type="match status" value="1"/>
</dbReference>
<dbReference type="PANTHER" id="PTHR21110:SF0">
    <property type="entry name" value="PHOSPHOPENTOMUTASE"/>
    <property type="match status" value="1"/>
</dbReference>
<dbReference type="Pfam" id="PF01676">
    <property type="entry name" value="Metalloenzyme"/>
    <property type="match status" value="1"/>
</dbReference>
<dbReference type="PIRSF" id="PIRSF001491">
    <property type="entry name" value="Ppentomutase"/>
    <property type="match status" value="1"/>
</dbReference>
<dbReference type="SUPFAM" id="SSF53649">
    <property type="entry name" value="Alkaline phosphatase-like"/>
    <property type="match status" value="1"/>
</dbReference>
<dbReference type="SUPFAM" id="SSF143856">
    <property type="entry name" value="DeoB insert domain-like"/>
    <property type="match status" value="1"/>
</dbReference>
<comment type="function">
    <text evidence="1">Isomerase that catalyzes the conversion of deoxy-ribose 1-phosphate (dRib-1-P) and ribose 1-phosphate (Rib-1-P) to deoxy-ribose 5-phosphate (dRib-5-P) and ribose 5-phosphate (Rib-5-P), respectively.</text>
</comment>
<comment type="catalytic activity">
    <reaction evidence="1">
        <text>2-deoxy-alpha-D-ribose 1-phosphate = 2-deoxy-D-ribose 5-phosphate</text>
        <dbReference type="Rhea" id="RHEA:27658"/>
        <dbReference type="ChEBI" id="CHEBI:57259"/>
        <dbReference type="ChEBI" id="CHEBI:62877"/>
        <dbReference type="EC" id="5.4.2.7"/>
    </reaction>
</comment>
<comment type="catalytic activity">
    <reaction evidence="1">
        <text>alpha-D-ribose 1-phosphate = D-ribose 5-phosphate</text>
        <dbReference type="Rhea" id="RHEA:18793"/>
        <dbReference type="ChEBI" id="CHEBI:57720"/>
        <dbReference type="ChEBI" id="CHEBI:78346"/>
        <dbReference type="EC" id="5.4.2.7"/>
    </reaction>
</comment>
<comment type="cofactor">
    <cofactor evidence="1">
        <name>Mn(2+)</name>
        <dbReference type="ChEBI" id="CHEBI:29035"/>
    </cofactor>
    <text evidence="1">Binds 2 manganese ions.</text>
</comment>
<comment type="pathway">
    <text evidence="1">Carbohydrate degradation; 2-deoxy-D-ribose 1-phosphate degradation; D-glyceraldehyde 3-phosphate and acetaldehyde from 2-deoxy-alpha-D-ribose 1-phosphate: step 1/2.</text>
</comment>
<comment type="subcellular location">
    <subcellularLocation>
        <location evidence="1">Cytoplasm</location>
    </subcellularLocation>
</comment>
<comment type="similarity">
    <text evidence="1">Belongs to the phosphopentomutase family.</text>
</comment>
<sequence length="389" mass="41960">MDRRRFVILVADSVGCGALPDARAYGDEGSDTLGNTSRAVGGLSLPVLGRMGIGHLTPILGVPPEPSPLAFHGRMAERSQGKDTITGHWEMMGIVLSEPLALFPRGFPPEILDPFLRETGLPGVLGNVAASGTEIIRELGEEHQRTGMPIVYTSADSVFQIAAHEETVPLETLYAWCRVARRILDPYRVARVIARPFVGKPGEYVRTYHRKDFSIATPGRTVLEKLVDARVPVVGVGKIPDIFDRKGITDELHTAGNADGLAKTEALLDRVDHGLVFVNLVDFDMLYGHRNDPQGYARALEEMDRALPRILGKLRPGEVAALTADHGCDPTTPSTDHSREYVPLVVHAPGRGGGALGTRGSFADLGATVADFFGVRHETGRSFLGDLGP</sequence>
<evidence type="ECO:0000255" key="1">
    <source>
        <dbReference type="HAMAP-Rule" id="MF_00740"/>
    </source>
</evidence>
<organism>
    <name type="scientific">Anaeromyxobacter sp. (strain Fw109-5)</name>
    <dbReference type="NCBI Taxonomy" id="404589"/>
    <lineage>
        <taxon>Bacteria</taxon>
        <taxon>Pseudomonadati</taxon>
        <taxon>Myxococcota</taxon>
        <taxon>Myxococcia</taxon>
        <taxon>Myxococcales</taxon>
        <taxon>Cystobacterineae</taxon>
        <taxon>Anaeromyxobacteraceae</taxon>
        <taxon>Anaeromyxobacter</taxon>
    </lineage>
</organism>
<proteinExistence type="inferred from homology"/>